<accession>A6THH4</accession>
<name>PYRB_KLEP7</name>
<proteinExistence type="inferred from homology"/>
<keyword id="KW-0665">Pyrimidine biosynthesis</keyword>
<keyword id="KW-0808">Transferase</keyword>
<protein>
    <recommendedName>
        <fullName evidence="1">Aspartate carbamoyltransferase catalytic subunit</fullName>
        <ecNumber evidence="1">2.1.3.2</ecNumber>
    </recommendedName>
    <alternativeName>
        <fullName evidence="1">Aspartate transcarbamylase</fullName>
        <shortName evidence="1">ATCase</shortName>
    </alternativeName>
</protein>
<comment type="function">
    <text evidence="1">Catalyzes the condensation of carbamoyl phosphate and aspartate to form carbamoyl aspartate and inorganic phosphate, the committed step in the de novo pyrimidine nucleotide biosynthesis pathway.</text>
</comment>
<comment type="catalytic activity">
    <reaction evidence="1">
        <text>carbamoyl phosphate + L-aspartate = N-carbamoyl-L-aspartate + phosphate + H(+)</text>
        <dbReference type="Rhea" id="RHEA:20013"/>
        <dbReference type="ChEBI" id="CHEBI:15378"/>
        <dbReference type="ChEBI" id="CHEBI:29991"/>
        <dbReference type="ChEBI" id="CHEBI:32814"/>
        <dbReference type="ChEBI" id="CHEBI:43474"/>
        <dbReference type="ChEBI" id="CHEBI:58228"/>
        <dbReference type="EC" id="2.1.3.2"/>
    </reaction>
</comment>
<comment type="pathway">
    <text evidence="1">Pyrimidine metabolism; UMP biosynthesis via de novo pathway; (S)-dihydroorotate from bicarbonate: step 2/3.</text>
</comment>
<comment type="subunit">
    <text evidence="1">Heterododecamer (2C3:3R2) of six catalytic PyrB chains organized as two trimers (C3), and six regulatory PyrI chains organized as three dimers (R2).</text>
</comment>
<comment type="similarity">
    <text evidence="1">Belongs to the aspartate/ornithine carbamoyltransferase superfamily. ATCase family.</text>
</comment>
<feature type="chain" id="PRO_1000000011" description="Aspartate carbamoyltransferase catalytic subunit">
    <location>
        <begin position="1"/>
        <end position="311"/>
    </location>
</feature>
<feature type="binding site" evidence="1">
    <location>
        <position position="55"/>
    </location>
    <ligand>
        <name>carbamoyl phosphate</name>
        <dbReference type="ChEBI" id="CHEBI:58228"/>
    </ligand>
</feature>
<feature type="binding site" evidence="1">
    <location>
        <position position="56"/>
    </location>
    <ligand>
        <name>carbamoyl phosphate</name>
        <dbReference type="ChEBI" id="CHEBI:58228"/>
    </ligand>
</feature>
<feature type="binding site" evidence="1">
    <location>
        <position position="85"/>
    </location>
    <ligand>
        <name>L-aspartate</name>
        <dbReference type="ChEBI" id="CHEBI:29991"/>
    </ligand>
</feature>
<feature type="binding site" evidence="1">
    <location>
        <position position="106"/>
    </location>
    <ligand>
        <name>carbamoyl phosphate</name>
        <dbReference type="ChEBI" id="CHEBI:58228"/>
    </ligand>
</feature>
<feature type="binding site" evidence="1">
    <location>
        <position position="135"/>
    </location>
    <ligand>
        <name>carbamoyl phosphate</name>
        <dbReference type="ChEBI" id="CHEBI:58228"/>
    </ligand>
</feature>
<feature type="binding site" evidence="1">
    <location>
        <position position="138"/>
    </location>
    <ligand>
        <name>carbamoyl phosphate</name>
        <dbReference type="ChEBI" id="CHEBI:58228"/>
    </ligand>
</feature>
<feature type="binding site" evidence="1">
    <location>
        <position position="168"/>
    </location>
    <ligand>
        <name>L-aspartate</name>
        <dbReference type="ChEBI" id="CHEBI:29991"/>
    </ligand>
</feature>
<feature type="binding site" evidence="1">
    <location>
        <position position="230"/>
    </location>
    <ligand>
        <name>L-aspartate</name>
        <dbReference type="ChEBI" id="CHEBI:29991"/>
    </ligand>
</feature>
<feature type="binding site" evidence="1">
    <location>
        <position position="268"/>
    </location>
    <ligand>
        <name>carbamoyl phosphate</name>
        <dbReference type="ChEBI" id="CHEBI:58228"/>
    </ligand>
</feature>
<feature type="binding site" evidence="1">
    <location>
        <position position="269"/>
    </location>
    <ligand>
        <name>carbamoyl phosphate</name>
        <dbReference type="ChEBI" id="CHEBI:58228"/>
    </ligand>
</feature>
<gene>
    <name evidence="1" type="primary">pyrB</name>
    <name type="ordered locus">KPN78578_45840</name>
    <name type="ORF">KPN_04657</name>
</gene>
<reference key="1">
    <citation type="submission" date="2006-09" db="EMBL/GenBank/DDBJ databases">
        <authorList>
            <consortium name="The Klebsiella pneumonia Genome Sequencing Project"/>
            <person name="McClelland M."/>
            <person name="Sanderson E.K."/>
            <person name="Spieth J."/>
            <person name="Clifton W.S."/>
            <person name="Latreille P."/>
            <person name="Sabo A."/>
            <person name="Pepin K."/>
            <person name="Bhonagiri V."/>
            <person name="Porwollik S."/>
            <person name="Ali J."/>
            <person name="Wilson R.K."/>
        </authorList>
    </citation>
    <scope>NUCLEOTIDE SEQUENCE [LARGE SCALE GENOMIC DNA]</scope>
    <source>
        <strain>ATCC 700721 / MGH 78578</strain>
    </source>
</reference>
<evidence type="ECO:0000255" key="1">
    <source>
        <dbReference type="HAMAP-Rule" id="MF_00001"/>
    </source>
</evidence>
<organism>
    <name type="scientific">Klebsiella pneumoniae subsp. pneumoniae (strain ATCC 700721 / MGH 78578)</name>
    <dbReference type="NCBI Taxonomy" id="272620"/>
    <lineage>
        <taxon>Bacteria</taxon>
        <taxon>Pseudomonadati</taxon>
        <taxon>Pseudomonadota</taxon>
        <taxon>Gammaproteobacteria</taxon>
        <taxon>Enterobacterales</taxon>
        <taxon>Enterobacteriaceae</taxon>
        <taxon>Klebsiella/Raoultella group</taxon>
        <taxon>Klebsiella</taxon>
        <taxon>Klebsiella pneumoniae complex</taxon>
    </lineage>
</organism>
<dbReference type="EC" id="2.1.3.2" evidence="1"/>
<dbReference type="EMBL" id="CP000647">
    <property type="protein sequence ID" value="ABR80008.1"/>
    <property type="molecule type" value="Genomic_DNA"/>
</dbReference>
<dbReference type="RefSeq" id="WP_002886928.1">
    <property type="nucleotide sequence ID" value="NC_009648.1"/>
</dbReference>
<dbReference type="SMR" id="A6THH4"/>
<dbReference type="STRING" id="272620.KPN_04657"/>
<dbReference type="jPOST" id="A6THH4"/>
<dbReference type="PaxDb" id="272620-KPN_04657"/>
<dbReference type="EnsemblBacteria" id="ABR80008">
    <property type="protein sequence ID" value="ABR80008"/>
    <property type="gene ID" value="KPN_04657"/>
</dbReference>
<dbReference type="GeneID" id="69757446"/>
<dbReference type="KEGG" id="kpn:KPN_04657"/>
<dbReference type="HOGENOM" id="CLU_043846_1_2_6"/>
<dbReference type="UniPathway" id="UPA00070">
    <property type="reaction ID" value="UER00116"/>
</dbReference>
<dbReference type="Proteomes" id="UP000000265">
    <property type="component" value="Chromosome"/>
</dbReference>
<dbReference type="GO" id="GO:0005829">
    <property type="term" value="C:cytosol"/>
    <property type="evidence" value="ECO:0007669"/>
    <property type="project" value="TreeGrafter"/>
</dbReference>
<dbReference type="GO" id="GO:0016597">
    <property type="term" value="F:amino acid binding"/>
    <property type="evidence" value="ECO:0007669"/>
    <property type="project" value="InterPro"/>
</dbReference>
<dbReference type="GO" id="GO:0004070">
    <property type="term" value="F:aspartate carbamoyltransferase activity"/>
    <property type="evidence" value="ECO:0007669"/>
    <property type="project" value="UniProtKB-UniRule"/>
</dbReference>
<dbReference type="GO" id="GO:0006207">
    <property type="term" value="P:'de novo' pyrimidine nucleobase biosynthetic process"/>
    <property type="evidence" value="ECO:0007669"/>
    <property type="project" value="InterPro"/>
</dbReference>
<dbReference type="GO" id="GO:0044205">
    <property type="term" value="P:'de novo' UMP biosynthetic process"/>
    <property type="evidence" value="ECO:0007669"/>
    <property type="project" value="UniProtKB-UniRule"/>
</dbReference>
<dbReference type="GO" id="GO:0006520">
    <property type="term" value="P:amino acid metabolic process"/>
    <property type="evidence" value="ECO:0007669"/>
    <property type="project" value="InterPro"/>
</dbReference>
<dbReference type="FunFam" id="3.40.50.1370:FF:000001">
    <property type="entry name" value="Aspartate carbamoyltransferase"/>
    <property type="match status" value="1"/>
</dbReference>
<dbReference type="FunFam" id="3.40.50.1370:FF:000002">
    <property type="entry name" value="Aspartate carbamoyltransferase 2"/>
    <property type="match status" value="1"/>
</dbReference>
<dbReference type="Gene3D" id="3.40.50.1370">
    <property type="entry name" value="Aspartate/ornithine carbamoyltransferase"/>
    <property type="match status" value="2"/>
</dbReference>
<dbReference type="HAMAP" id="MF_00001">
    <property type="entry name" value="Asp_carb_tr"/>
    <property type="match status" value="1"/>
</dbReference>
<dbReference type="InterPro" id="IPR006132">
    <property type="entry name" value="Asp/Orn_carbamoyltranf_P-bd"/>
</dbReference>
<dbReference type="InterPro" id="IPR006130">
    <property type="entry name" value="Asp/Orn_carbamoylTrfase"/>
</dbReference>
<dbReference type="InterPro" id="IPR036901">
    <property type="entry name" value="Asp/Orn_carbamoylTrfase_sf"/>
</dbReference>
<dbReference type="InterPro" id="IPR002082">
    <property type="entry name" value="Asp_carbamoyltransf"/>
</dbReference>
<dbReference type="InterPro" id="IPR006131">
    <property type="entry name" value="Asp_carbamoyltransf_Asp/Orn-bd"/>
</dbReference>
<dbReference type="NCBIfam" id="TIGR00670">
    <property type="entry name" value="asp_carb_tr"/>
    <property type="match status" value="1"/>
</dbReference>
<dbReference type="NCBIfam" id="NF002032">
    <property type="entry name" value="PRK00856.1"/>
    <property type="match status" value="1"/>
</dbReference>
<dbReference type="PANTHER" id="PTHR45753:SF6">
    <property type="entry name" value="ASPARTATE CARBAMOYLTRANSFERASE"/>
    <property type="match status" value="1"/>
</dbReference>
<dbReference type="PANTHER" id="PTHR45753">
    <property type="entry name" value="ORNITHINE CARBAMOYLTRANSFERASE, MITOCHONDRIAL"/>
    <property type="match status" value="1"/>
</dbReference>
<dbReference type="Pfam" id="PF00185">
    <property type="entry name" value="OTCace"/>
    <property type="match status" value="1"/>
</dbReference>
<dbReference type="Pfam" id="PF02729">
    <property type="entry name" value="OTCace_N"/>
    <property type="match status" value="1"/>
</dbReference>
<dbReference type="PRINTS" id="PR00100">
    <property type="entry name" value="AOTCASE"/>
</dbReference>
<dbReference type="PRINTS" id="PR00101">
    <property type="entry name" value="ATCASE"/>
</dbReference>
<dbReference type="SUPFAM" id="SSF53671">
    <property type="entry name" value="Aspartate/ornithine carbamoyltransferase"/>
    <property type="match status" value="1"/>
</dbReference>
<dbReference type="PROSITE" id="PS00097">
    <property type="entry name" value="CARBAMOYLTRANSFERASE"/>
    <property type="match status" value="1"/>
</dbReference>
<sequence>MANPLYQKHIISINDLSREDLELVLATAAKLKANPQPELLKHKVIASCFFEASTRTRLSFETSMHRLGASVVGFSDSANTSLGKKGETLADTISVISTYVDAIVMRHPQEGAARLATEFSGGVPVLNAGDGANQHPTQTLLDLFTIQETQGRLENLNVAMVGDLKYGRTVHSLTQALAKFNGNRFYFIAPDALAMPQYILDMLDEKGIAWSLHSAIDDVMAEVDILYMTRVQKERLDPSEYANVKAQFVLRAADLEGARANMKVLHPLPRIDEITTDVDKTPHAWYFQQAGNGIFARQALLALVLNSELAL</sequence>